<dbReference type="EMBL" id="U50472">
    <property type="protein sequence ID" value="AAA93475.1"/>
    <property type="status" value="ALT_INIT"/>
    <property type="molecule type" value="mRNA"/>
</dbReference>
<dbReference type="EMBL" id="AAAB01008904">
    <property type="status" value="NOT_ANNOTATED_CDS"/>
    <property type="molecule type" value="Genomic_DNA"/>
</dbReference>
<dbReference type="SMR" id="Q17017"/>
<dbReference type="FunCoup" id="Q17017">
    <property type="interactions" value="160"/>
</dbReference>
<dbReference type="STRING" id="7165.Q17017"/>
<dbReference type="VEuPathDB" id="VectorBase:AGAMI1_005085"/>
<dbReference type="VEuPathDB" id="VectorBase:AGAP013400"/>
<dbReference type="HOGENOM" id="CLU_113772_0_0_1"/>
<dbReference type="InParanoid" id="Q17017"/>
<dbReference type="Proteomes" id="UP000007062">
    <property type="component" value="Chromosome 2R"/>
</dbReference>
<dbReference type="GO" id="GO:0005829">
    <property type="term" value="C:cytosol"/>
    <property type="evidence" value="ECO:0000318"/>
    <property type="project" value="GO_Central"/>
</dbReference>
<dbReference type="GO" id="GO:0005634">
    <property type="term" value="C:nucleus"/>
    <property type="evidence" value="ECO:0000318"/>
    <property type="project" value="GO_Central"/>
</dbReference>
<dbReference type="GO" id="GO:0005504">
    <property type="term" value="F:fatty acid binding"/>
    <property type="evidence" value="ECO:0000318"/>
    <property type="project" value="GO_Central"/>
</dbReference>
<dbReference type="GO" id="GO:0015908">
    <property type="term" value="P:fatty acid transport"/>
    <property type="evidence" value="ECO:0000318"/>
    <property type="project" value="GO_Central"/>
</dbReference>
<dbReference type="Gene3D" id="2.40.128.20">
    <property type="match status" value="1"/>
</dbReference>
<dbReference type="InterPro" id="IPR012674">
    <property type="entry name" value="Calycin"/>
</dbReference>
<dbReference type="InterPro" id="IPR000463">
    <property type="entry name" value="Fatty_acid-bd"/>
</dbReference>
<dbReference type="InterPro" id="IPR031259">
    <property type="entry name" value="ILBP"/>
</dbReference>
<dbReference type="InterPro" id="IPR000566">
    <property type="entry name" value="Lipocln_cytosolic_FA-bd_dom"/>
</dbReference>
<dbReference type="PANTHER" id="PTHR11955">
    <property type="entry name" value="FATTY ACID BINDING PROTEIN"/>
    <property type="match status" value="1"/>
</dbReference>
<dbReference type="Pfam" id="PF00061">
    <property type="entry name" value="Lipocalin"/>
    <property type="match status" value="1"/>
</dbReference>
<dbReference type="PRINTS" id="PR00178">
    <property type="entry name" value="FATTYACIDBP"/>
</dbReference>
<dbReference type="SUPFAM" id="SSF50814">
    <property type="entry name" value="Lipocalins"/>
    <property type="match status" value="1"/>
</dbReference>
<dbReference type="PROSITE" id="PS00214">
    <property type="entry name" value="FABP"/>
    <property type="match status" value="1"/>
</dbReference>
<sequence>MAVWEGKKYKMEKSEGFDDYMKALGVGMVLRKLGNSISPTVELVKNGDEYTFNTLSPSRTRRSSSSWAMEFDEETVDGRMVKSVCTFDGNKLIHEQKGEKRPRSCASSLPPI</sequence>
<gene>
    <name type="ORF">ENSANGG00000000821</name>
</gene>
<gene>
    <name type="ORF">ENSANGG00000000822</name>
</gene>
<comment type="similarity">
    <text evidence="1">Belongs to the calycin superfamily. Fatty-acid binding protein (FABP) family.</text>
</comment>
<comment type="sequence caution" evidence="1">
    <conflict type="erroneous initiation">
        <sequence resource="EMBL-CDS" id="AAA93475"/>
    </conflict>
</comment>
<feature type="chain" id="PRO_0000067359" description="Probable fatty acid-binding protein">
    <location>
        <begin position="1"/>
        <end position="112"/>
    </location>
</feature>
<feature type="sequence conflict" description="In Ref. 1; AAA93475." evidence="1" ref="1">
    <original>K</original>
    <variation>L</variation>
    <location>
        <position position="22"/>
    </location>
</feature>
<organism>
    <name type="scientific">Anopheles gambiae</name>
    <name type="common">African malaria mosquito</name>
    <dbReference type="NCBI Taxonomy" id="7165"/>
    <lineage>
        <taxon>Eukaryota</taxon>
        <taxon>Metazoa</taxon>
        <taxon>Ecdysozoa</taxon>
        <taxon>Arthropoda</taxon>
        <taxon>Hexapoda</taxon>
        <taxon>Insecta</taxon>
        <taxon>Pterygota</taxon>
        <taxon>Neoptera</taxon>
        <taxon>Endopterygota</taxon>
        <taxon>Diptera</taxon>
        <taxon>Nematocera</taxon>
        <taxon>Culicoidea</taxon>
        <taxon>Culicidae</taxon>
        <taxon>Anophelinae</taxon>
        <taxon>Anopheles</taxon>
    </lineage>
</organism>
<accession>Q17017</accession>
<accession>Q5TSL6</accession>
<name>FABP_ANOGA</name>
<reference key="1">
    <citation type="submission" date="1996-04" db="EMBL/GenBank/DDBJ databases">
        <authorList>
            <person name="Favia G."/>
            <person name="Mariotti G."/>
            <person name="Coluzzi M."/>
            <person name="Mathiopoulos K.D."/>
        </authorList>
    </citation>
    <scope>NUCLEOTIDE SEQUENCE [MRNA]</scope>
    <source>
        <strain>Gasua</strain>
    </source>
</reference>
<reference key="2">
    <citation type="journal article" date="2002" name="Science">
        <title>The genome sequence of the malaria mosquito Anopheles gambiae.</title>
        <authorList>
            <person name="Holt R.A."/>
            <person name="Subramanian G.M."/>
            <person name="Halpern A."/>
            <person name="Sutton G.G."/>
            <person name="Charlab R."/>
            <person name="Nusskern D.R."/>
            <person name="Wincker P."/>
            <person name="Clark A.G."/>
            <person name="Ribeiro J.M.C."/>
            <person name="Wides R."/>
            <person name="Salzberg S.L."/>
            <person name="Loftus B.J."/>
            <person name="Yandell M.D."/>
            <person name="Majoros W.H."/>
            <person name="Rusch D.B."/>
            <person name="Lai Z."/>
            <person name="Kraft C.L."/>
            <person name="Abril J.F."/>
            <person name="Anthouard V."/>
            <person name="Arensburger P."/>
            <person name="Atkinson P.W."/>
            <person name="Baden H."/>
            <person name="de Berardinis V."/>
            <person name="Baldwin D."/>
            <person name="Benes V."/>
            <person name="Biedler J."/>
            <person name="Blass C."/>
            <person name="Bolanos R."/>
            <person name="Boscus D."/>
            <person name="Barnstead M."/>
            <person name="Cai S."/>
            <person name="Center A."/>
            <person name="Chaturverdi K."/>
            <person name="Christophides G.K."/>
            <person name="Chrystal M.A.M."/>
            <person name="Clamp M."/>
            <person name="Cravchik A."/>
            <person name="Curwen V."/>
            <person name="Dana A."/>
            <person name="Delcher A."/>
            <person name="Dew I."/>
            <person name="Evans C.A."/>
            <person name="Flanigan M."/>
            <person name="Grundschober-Freimoser A."/>
            <person name="Friedli L."/>
            <person name="Gu Z."/>
            <person name="Guan P."/>
            <person name="Guigo R."/>
            <person name="Hillenmeyer M.E."/>
            <person name="Hladun S.L."/>
            <person name="Hogan J.R."/>
            <person name="Hong Y.S."/>
            <person name="Hoover J."/>
            <person name="Jaillon O."/>
            <person name="Ke Z."/>
            <person name="Kodira C.D."/>
            <person name="Kokoza E."/>
            <person name="Koutsos A."/>
            <person name="Letunic I."/>
            <person name="Levitsky A.A."/>
            <person name="Liang Y."/>
            <person name="Lin J.-J."/>
            <person name="Lobo N.F."/>
            <person name="Lopez J.R."/>
            <person name="Malek J.A."/>
            <person name="McIntosh T.C."/>
            <person name="Meister S."/>
            <person name="Miller J.R."/>
            <person name="Mobarry C."/>
            <person name="Mongin E."/>
            <person name="Murphy S.D."/>
            <person name="O'Brochta D.A."/>
            <person name="Pfannkoch C."/>
            <person name="Qi R."/>
            <person name="Regier M.A."/>
            <person name="Remington K."/>
            <person name="Shao H."/>
            <person name="Sharakhova M.V."/>
            <person name="Sitter C.D."/>
            <person name="Shetty J."/>
            <person name="Smith T.J."/>
            <person name="Strong R."/>
            <person name="Sun J."/>
            <person name="Thomasova D."/>
            <person name="Ton L.Q."/>
            <person name="Topalis P."/>
            <person name="Tu Z.J."/>
            <person name="Unger M.F."/>
            <person name="Walenz B."/>
            <person name="Wang A.H."/>
            <person name="Wang J."/>
            <person name="Wang M."/>
            <person name="Wang X."/>
            <person name="Woodford K.J."/>
            <person name="Wortman J.R."/>
            <person name="Wu M."/>
            <person name="Yao A."/>
            <person name="Zdobnov E.M."/>
            <person name="Zhang H."/>
            <person name="Zhao Q."/>
            <person name="Zhao S."/>
            <person name="Zhu S.C."/>
            <person name="Zhimulev I."/>
            <person name="Coluzzi M."/>
            <person name="della Torre A."/>
            <person name="Roth C.W."/>
            <person name="Louis C."/>
            <person name="Kalush F."/>
            <person name="Mural R.J."/>
            <person name="Myers E.W."/>
            <person name="Adams M.D."/>
            <person name="Smith H.O."/>
            <person name="Broder S."/>
            <person name="Gardner M.J."/>
            <person name="Fraser C.M."/>
            <person name="Birney E."/>
            <person name="Bork P."/>
            <person name="Brey P.T."/>
            <person name="Venter J.C."/>
            <person name="Weissenbach J."/>
            <person name="Kafatos F.C."/>
            <person name="Collins F.H."/>
            <person name="Hoffman S.L."/>
        </authorList>
    </citation>
    <scope>NUCLEOTIDE SEQUENCE [LARGE SCALE GENOMIC DNA]</scope>
    <source>
        <strain>PEST</strain>
    </source>
</reference>
<keyword id="KW-0446">Lipid-binding</keyword>
<keyword id="KW-1185">Reference proteome</keyword>
<keyword id="KW-0813">Transport</keyword>
<evidence type="ECO:0000305" key="1"/>
<proteinExistence type="inferred from homology"/>
<protein>
    <recommendedName>
        <fullName>Probable fatty acid-binding protein</fullName>
    </recommendedName>
</protein>